<name>Y1853_YERPG</name>
<protein>
    <recommendedName>
        <fullName evidence="1">UPF0250 protein YpAngola_A1853</fullName>
    </recommendedName>
</protein>
<sequence>MKTKLNELLEFPCSFTYKVMGIAEPQLVDQVVEVVQRHAPGEYTPQVKPSSKGNYHSVSITITATHIDQVETLYEELGNLELVKMVL</sequence>
<comment type="similarity">
    <text evidence="1">Belongs to the UPF0250 family.</text>
</comment>
<reference key="1">
    <citation type="journal article" date="2010" name="J. Bacteriol.">
        <title>Genome sequence of the deep-rooted Yersinia pestis strain Angola reveals new insights into the evolution and pangenome of the plague bacterium.</title>
        <authorList>
            <person name="Eppinger M."/>
            <person name="Worsham P.L."/>
            <person name="Nikolich M.P."/>
            <person name="Riley D.R."/>
            <person name="Sebastian Y."/>
            <person name="Mou S."/>
            <person name="Achtman M."/>
            <person name="Lindler L.E."/>
            <person name="Ravel J."/>
        </authorList>
    </citation>
    <scope>NUCLEOTIDE SEQUENCE [LARGE SCALE GENOMIC DNA]</scope>
    <source>
        <strain>Angola</strain>
    </source>
</reference>
<proteinExistence type="inferred from homology"/>
<evidence type="ECO:0000255" key="1">
    <source>
        <dbReference type="HAMAP-Rule" id="MF_00659"/>
    </source>
</evidence>
<organism>
    <name type="scientific">Yersinia pestis bv. Antiqua (strain Angola)</name>
    <dbReference type="NCBI Taxonomy" id="349746"/>
    <lineage>
        <taxon>Bacteria</taxon>
        <taxon>Pseudomonadati</taxon>
        <taxon>Pseudomonadota</taxon>
        <taxon>Gammaproteobacteria</taxon>
        <taxon>Enterobacterales</taxon>
        <taxon>Yersiniaceae</taxon>
        <taxon>Yersinia</taxon>
    </lineage>
</organism>
<gene>
    <name type="ordered locus">YpAngola_A1853</name>
</gene>
<feature type="chain" id="PRO_1000131268" description="UPF0250 protein YpAngola_A1853">
    <location>
        <begin position="1"/>
        <end position="87"/>
    </location>
</feature>
<dbReference type="EMBL" id="CP000901">
    <property type="protein sequence ID" value="ABX85847.1"/>
    <property type="molecule type" value="Genomic_DNA"/>
</dbReference>
<dbReference type="SMR" id="A9R701"/>
<dbReference type="KEGG" id="ypg:YpAngola_A1853"/>
<dbReference type="PATRIC" id="fig|349746.12.peg.2828"/>
<dbReference type="GO" id="GO:0005829">
    <property type="term" value="C:cytosol"/>
    <property type="evidence" value="ECO:0007669"/>
    <property type="project" value="TreeGrafter"/>
</dbReference>
<dbReference type="FunFam" id="3.30.70.260:FF:000002">
    <property type="entry name" value="UPF0250 protein YbeD"/>
    <property type="match status" value="1"/>
</dbReference>
<dbReference type="Gene3D" id="3.30.70.260">
    <property type="match status" value="1"/>
</dbReference>
<dbReference type="HAMAP" id="MF_00659">
    <property type="entry name" value="UPF0250"/>
    <property type="match status" value="1"/>
</dbReference>
<dbReference type="InterPro" id="IPR007454">
    <property type="entry name" value="UPF0250_YbeD-like"/>
</dbReference>
<dbReference type="InterPro" id="IPR027471">
    <property type="entry name" value="YbeD-like_sf"/>
</dbReference>
<dbReference type="NCBIfam" id="NF003447">
    <property type="entry name" value="PRK04998.1"/>
    <property type="match status" value="1"/>
</dbReference>
<dbReference type="PANTHER" id="PTHR38036">
    <property type="entry name" value="UPF0250 PROTEIN YBED"/>
    <property type="match status" value="1"/>
</dbReference>
<dbReference type="PANTHER" id="PTHR38036:SF1">
    <property type="entry name" value="UPF0250 PROTEIN YBED"/>
    <property type="match status" value="1"/>
</dbReference>
<dbReference type="Pfam" id="PF04359">
    <property type="entry name" value="DUF493"/>
    <property type="match status" value="1"/>
</dbReference>
<dbReference type="SUPFAM" id="SSF117991">
    <property type="entry name" value="YbeD/HP0495-like"/>
    <property type="match status" value="1"/>
</dbReference>
<accession>A9R701</accession>